<proteinExistence type="inferred from homology"/>
<accession>Q57GZ2</accession>
<evidence type="ECO:0000255" key="1">
    <source>
        <dbReference type="HAMAP-Rule" id="MF_00393"/>
    </source>
</evidence>
<keyword id="KW-0012">Acyltransferase</keyword>
<keyword id="KW-0997">Cell inner membrane</keyword>
<keyword id="KW-1003">Cell membrane</keyword>
<keyword id="KW-0444">Lipid biosynthesis</keyword>
<keyword id="KW-0443">Lipid metabolism</keyword>
<keyword id="KW-0472">Membrane</keyword>
<keyword id="KW-0594">Phospholipid biosynthesis</keyword>
<keyword id="KW-1208">Phospholipid metabolism</keyword>
<keyword id="KW-0808">Transferase</keyword>
<gene>
    <name evidence="1" type="primary">plsB</name>
    <name type="ordered locus">SCH_4114</name>
</gene>
<organism>
    <name type="scientific">Salmonella choleraesuis (strain SC-B67)</name>
    <dbReference type="NCBI Taxonomy" id="321314"/>
    <lineage>
        <taxon>Bacteria</taxon>
        <taxon>Pseudomonadati</taxon>
        <taxon>Pseudomonadota</taxon>
        <taxon>Gammaproteobacteria</taxon>
        <taxon>Enterobacterales</taxon>
        <taxon>Enterobacteriaceae</taxon>
        <taxon>Salmonella</taxon>
    </lineage>
</organism>
<dbReference type="EC" id="2.3.1.15" evidence="1"/>
<dbReference type="EMBL" id="AE017220">
    <property type="protein sequence ID" value="AAX68020.1"/>
    <property type="molecule type" value="Genomic_DNA"/>
</dbReference>
<dbReference type="RefSeq" id="WP_000017360.1">
    <property type="nucleotide sequence ID" value="NC_006905.1"/>
</dbReference>
<dbReference type="SMR" id="Q57GZ2"/>
<dbReference type="KEGG" id="sec:SCH_4114"/>
<dbReference type="HOGENOM" id="CLU_015407_0_0_6"/>
<dbReference type="UniPathway" id="UPA00557">
    <property type="reaction ID" value="UER00612"/>
</dbReference>
<dbReference type="Proteomes" id="UP000000538">
    <property type="component" value="Chromosome"/>
</dbReference>
<dbReference type="GO" id="GO:0005886">
    <property type="term" value="C:plasma membrane"/>
    <property type="evidence" value="ECO:0007669"/>
    <property type="project" value="UniProtKB-SubCell"/>
</dbReference>
<dbReference type="GO" id="GO:0004366">
    <property type="term" value="F:glycerol-3-phosphate O-acyltransferase activity"/>
    <property type="evidence" value="ECO:0007669"/>
    <property type="project" value="UniProtKB-UniRule"/>
</dbReference>
<dbReference type="GO" id="GO:0016024">
    <property type="term" value="P:CDP-diacylglycerol biosynthetic process"/>
    <property type="evidence" value="ECO:0007669"/>
    <property type="project" value="UniProtKB-UniRule"/>
</dbReference>
<dbReference type="GO" id="GO:0006631">
    <property type="term" value="P:fatty acid metabolic process"/>
    <property type="evidence" value="ECO:0007669"/>
    <property type="project" value="TreeGrafter"/>
</dbReference>
<dbReference type="CDD" id="cd07993">
    <property type="entry name" value="LPLAT_DHAPAT-like"/>
    <property type="match status" value="1"/>
</dbReference>
<dbReference type="HAMAP" id="MF_00393">
    <property type="entry name" value="Glyc3P_acyltrans"/>
    <property type="match status" value="1"/>
</dbReference>
<dbReference type="InterPro" id="IPR022284">
    <property type="entry name" value="GPAT/DHAPAT"/>
</dbReference>
<dbReference type="InterPro" id="IPR045520">
    <property type="entry name" value="GPAT/DHAPAT_C"/>
</dbReference>
<dbReference type="InterPro" id="IPR041728">
    <property type="entry name" value="GPAT/DHAPAT_LPLAT"/>
</dbReference>
<dbReference type="InterPro" id="IPR028354">
    <property type="entry name" value="GPAT_PlsB"/>
</dbReference>
<dbReference type="InterPro" id="IPR002123">
    <property type="entry name" value="Plipid/glycerol_acylTrfase"/>
</dbReference>
<dbReference type="NCBIfam" id="TIGR03703">
    <property type="entry name" value="plsB"/>
    <property type="match status" value="1"/>
</dbReference>
<dbReference type="NCBIfam" id="NF003441">
    <property type="entry name" value="PRK04974.1"/>
    <property type="match status" value="1"/>
</dbReference>
<dbReference type="PANTHER" id="PTHR12563:SF17">
    <property type="entry name" value="DIHYDROXYACETONE PHOSPHATE ACYLTRANSFERASE"/>
    <property type="match status" value="1"/>
</dbReference>
<dbReference type="PANTHER" id="PTHR12563">
    <property type="entry name" value="GLYCEROL-3-PHOSPHATE ACYLTRANSFERASE"/>
    <property type="match status" value="1"/>
</dbReference>
<dbReference type="Pfam" id="PF01553">
    <property type="entry name" value="Acyltransferase"/>
    <property type="match status" value="1"/>
</dbReference>
<dbReference type="Pfam" id="PF19277">
    <property type="entry name" value="GPAT_C"/>
    <property type="match status" value="1"/>
</dbReference>
<dbReference type="PIRSF" id="PIRSF500064">
    <property type="entry name" value="GPAT"/>
    <property type="match status" value="1"/>
</dbReference>
<dbReference type="PIRSF" id="PIRSF000437">
    <property type="entry name" value="GPAT_DHAPAT"/>
    <property type="match status" value="1"/>
</dbReference>
<dbReference type="SMART" id="SM00563">
    <property type="entry name" value="PlsC"/>
    <property type="match status" value="1"/>
</dbReference>
<dbReference type="SUPFAM" id="SSF69593">
    <property type="entry name" value="Glycerol-3-phosphate (1)-acyltransferase"/>
    <property type="match status" value="1"/>
</dbReference>
<feature type="chain" id="PRO_1000049451" description="Glycerol-3-phosphate acyltransferase">
    <location>
        <begin position="1"/>
        <end position="806"/>
    </location>
</feature>
<feature type="short sequence motif" description="HXXXXD motif">
    <location>
        <begin position="305"/>
        <end position="310"/>
    </location>
</feature>
<sequence>MSGWPRIYYKLLNLPLSILVKSKSIPAEPAQELGLDTSRPIMYVLPYNSKADLLTLRAQCLAHDLPDPLEPLEIDGALLPRYVFIHGGPRVFTYYTPKEESVKLFHDYLDLHRSNPALDVQMVPVSVMFGRAPGREKGEDNPPLRMLNGVQKFFAISWLGRDSFVRFSPSVSLRRMADEHGTDKIIAQKLARVARMHFARQRLAAVGPRLPARQDLFNKLLASKAIARAVEDEARSKKISHEKAQQNAIALMEEIAANFSYEMIRLTDRILGFTWNRLYQGINVHNAERVRQLAHDGHEIVYVPCHRSHMDYLLLSYVLYHQGLVPPHIAAGINLNFWPAGPIFRRLGAFFIRRTFKGNKLYSTVFREYLGELFSRGYSVEYFVEGGRSRTGRLLDPKTGTLSMTIQAMLRGGTRPITLVPIYIGYEHVMEVGTYAKELRGATKEKESLPQMLKGLSKLRNLGQGYVNFGEPMPLMTYLNQHVPEWRESIDPIEAIRPAWLTPTVNSIAADLMVRINNAGAANAMNLCCTALLASRQRSLTREQLTEQLDCYLDLMRNVPYSTDSTVPAASAGELIAHALQMNKFEVEKDTIGDIIILPREQAVLMTYYRNNIAHMLIMPSLMAAIITQHRRISRDALQQHVEALYPMLKAELFLRWEREELASVIDALASEMQRQGLITLQDDELHINPTHSRTLQLLAAGARETLQRYAITFWLLSANPSINRSTLEKESRTVAQRLSVLHGINAPEFFDKAVFSSLVLTLRDEGYISDTGDAEPAETMKIYQMLADLITSDVRLTIESATQGE</sequence>
<name>PLSB_SALCH</name>
<reference key="1">
    <citation type="journal article" date="2005" name="Nucleic Acids Res.">
        <title>The genome sequence of Salmonella enterica serovar Choleraesuis, a highly invasive and resistant zoonotic pathogen.</title>
        <authorList>
            <person name="Chiu C.-H."/>
            <person name="Tang P."/>
            <person name="Chu C."/>
            <person name="Hu S."/>
            <person name="Bao Q."/>
            <person name="Yu J."/>
            <person name="Chou Y.-Y."/>
            <person name="Wang H.-S."/>
            <person name="Lee Y.-S."/>
        </authorList>
    </citation>
    <scope>NUCLEOTIDE SEQUENCE [LARGE SCALE GENOMIC DNA]</scope>
    <source>
        <strain>SC-B67</strain>
    </source>
</reference>
<protein>
    <recommendedName>
        <fullName evidence="1">Glycerol-3-phosphate acyltransferase</fullName>
        <shortName evidence="1">GPAT</shortName>
        <ecNumber evidence="1">2.3.1.15</ecNumber>
    </recommendedName>
</protein>
<comment type="catalytic activity">
    <reaction evidence="1">
        <text>sn-glycerol 3-phosphate + an acyl-CoA = a 1-acyl-sn-glycero-3-phosphate + CoA</text>
        <dbReference type="Rhea" id="RHEA:15325"/>
        <dbReference type="ChEBI" id="CHEBI:57287"/>
        <dbReference type="ChEBI" id="CHEBI:57597"/>
        <dbReference type="ChEBI" id="CHEBI:57970"/>
        <dbReference type="ChEBI" id="CHEBI:58342"/>
        <dbReference type="EC" id="2.3.1.15"/>
    </reaction>
</comment>
<comment type="pathway">
    <text evidence="1">Phospholipid metabolism; CDP-diacylglycerol biosynthesis; CDP-diacylglycerol from sn-glycerol 3-phosphate: step 1/3.</text>
</comment>
<comment type="subcellular location">
    <subcellularLocation>
        <location evidence="1">Cell inner membrane</location>
        <topology evidence="1">Peripheral membrane protein</topology>
        <orientation evidence="1">Cytoplasmic side</orientation>
    </subcellularLocation>
</comment>
<comment type="domain">
    <text evidence="1">The HXXXXD motif is essential for acyltransferase activity and may constitute the binding site for the phosphate moiety of the glycerol-3-phosphate.</text>
</comment>
<comment type="similarity">
    <text evidence="1">Belongs to the GPAT/DAPAT family.</text>
</comment>